<keyword id="KW-0963">Cytoplasm</keyword>
<keyword id="KW-0413">Isomerase</keyword>
<keyword id="KW-1185">Reference proteome</keyword>
<keyword id="KW-0697">Rotamase</keyword>
<gene>
    <name type="primary">cyp1</name>
    <name type="ORF">RO3G_02483</name>
</gene>
<comment type="function">
    <text evidence="1">PPIases accelerate the folding of proteins. It catalyzes the cis-trans isomerization of proline imidic peptide bonds in oligopeptides (By similarity).</text>
</comment>
<comment type="catalytic activity">
    <reaction>
        <text>[protein]-peptidylproline (omega=180) = [protein]-peptidylproline (omega=0)</text>
        <dbReference type="Rhea" id="RHEA:16237"/>
        <dbReference type="Rhea" id="RHEA-COMP:10747"/>
        <dbReference type="Rhea" id="RHEA-COMP:10748"/>
        <dbReference type="ChEBI" id="CHEBI:83833"/>
        <dbReference type="ChEBI" id="CHEBI:83834"/>
        <dbReference type="EC" id="5.2.1.8"/>
    </reaction>
</comment>
<comment type="activity regulation">
    <text evidence="1">Binds cyclosporin A (CsA). CsA mediates some of its effects via an inhibitory action on PPIase (By similarity).</text>
</comment>
<comment type="subcellular location">
    <subcellularLocation>
        <location evidence="1">Cytoplasm</location>
    </subcellularLocation>
</comment>
<comment type="similarity">
    <text evidence="3">Belongs to the cyclophilin-type PPIase family. PPIase A subfamily.</text>
</comment>
<comment type="sequence caution" evidence="3">
    <conflict type="erroneous gene model prediction">
        <sequence resource="EMBL-CDS" id="EIE77779"/>
    </conflict>
</comment>
<proteinExistence type="inferred from homology"/>
<evidence type="ECO:0000250" key="1"/>
<evidence type="ECO:0000255" key="2">
    <source>
        <dbReference type="PROSITE-ProRule" id="PRU00156"/>
    </source>
</evidence>
<evidence type="ECO:0000305" key="3"/>
<name>PPIA2_RHIO9</name>
<reference key="1">
    <citation type="journal article" date="2009" name="PLoS Genet.">
        <title>Genomic analysis of the basal lineage fungus Rhizopus oryzae reveals a whole-genome duplication.</title>
        <authorList>
            <person name="Ma L.-J."/>
            <person name="Ibrahim A.S."/>
            <person name="Skory C."/>
            <person name="Grabherr M.G."/>
            <person name="Burger G."/>
            <person name="Butler M."/>
            <person name="Elias M."/>
            <person name="Idnurm A."/>
            <person name="Lang B.F."/>
            <person name="Sone T."/>
            <person name="Abe A."/>
            <person name="Calvo S.E."/>
            <person name="Corrochano L.M."/>
            <person name="Engels R."/>
            <person name="Fu J."/>
            <person name="Hansberg W."/>
            <person name="Kim J.-M."/>
            <person name="Kodira C.D."/>
            <person name="Koehrsen M.J."/>
            <person name="Liu B."/>
            <person name="Miranda-Saavedra D."/>
            <person name="O'Leary S."/>
            <person name="Ortiz-Castellanos L."/>
            <person name="Poulter R."/>
            <person name="Rodriguez-Romero J."/>
            <person name="Ruiz-Herrera J."/>
            <person name="Shen Y.-Q."/>
            <person name="Zeng Q."/>
            <person name="Galagan J."/>
            <person name="Birren B.W."/>
            <person name="Cuomo C.A."/>
            <person name="Wickes B.L."/>
        </authorList>
    </citation>
    <scope>NUCLEOTIDE SEQUENCE [LARGE SCALE GENOMIC DNA]</scope>
    <source>
        <strain>RA 99-880 / ATCC MYA-4621 / FGSC 9543 / NRRL 43880</strain>
    </source>
</reference>
<reference key="2">
    <citation type="journal article" date="2006" name="BMC Genomics">
        <title>Identification and comparative analysis of sixteen fungal peptidyl-prolyl cis/trans isomerase repertoires.</title>
        <authorList>
            <person name="Pemberton T.J."/>
        </authorList>
    </citation>
    <scope>REVISION OF GENE MODEL</scope>
</reference>
<protein>
    <recommendedName>
        <fullName>Peptidyl-prolyl cis-trans isomerase A2</fullName>
        <shortName>PPIase A2</shortName>
        <ecNumber>5.2.1.8</ecNumber>
    </recommendedName>
    <alternativeName>
        <fullName>Cyclophilin A2</fullName>
    </alternativeName>
    <alternativeName>
        <fullName>Cyclosporin A-binding protein</fullName>
    </alternativeName>
    <alternativeName>
        <fullName>Rotamase A2</fullName>
    </alternativeName>
</protein>
<feature type="chain" id="PRO_0000244711" description="Peptidyl-prolyl cis-trans isomerase A2">
    <location>
        <begin position="1"/>
        <end position="161"/>
    </location>
</feature>
<feature type="domain" description="PPIase cyclophilin-type" evidence="2">
    <location>
        <begin position="4"/>
        <end position="160"/>
    </location>
</feature>
<sequence>MSVYFDISIDGKPAGRIEFQLFEDVVPKTAKNFRALCTGEQGFGYKGSKFHRVIPQFMLQGGDFTRGDGTGGKSIYGEKFADENFKLKHSEPGLLSMANAGPNTNGSQFFITTVPCSWLDGAHVVFGKVTKNMELVSKIESLGSASGAVKAKVVIEDCGVL</sequence>
<organism>
    <name type="scientific">Rhizopus delemar (strain RA 99-880 / ATCC MYA-4621 / FGSC 9543 / NRRL 43880)</name>
    <name type="common">Mucormycosis agent</name>
    <name type="synonym">Rhizopus arrhizus var. delemar</name>
    <dbReference type="NCBI Taxonomy" id="246409"/>
    <lineage>
        <taxon>Eukaryota</taxon>
        <taxon>Fungi</taxon>
        <taxon>Fungi incertae sedis</taxon>
        <taxon>Mucoromycota</taxon>
        <taxon>Mucoromycotina</taxon>
        <taxon>Mucoromycetes</taxon>
        <taxon>Mucorales</taxon>
        <taxon>Mucorineae</taxon>
        <taxon>Rhizopodaceae</taxon>
        <taxon>Rhizopus</taxon>
    </lineage>
</organism>
<dbReference type="EC" id="5.2.1.8"/>
<dbReference type="EMBL" id="CH476733">
    <property type="protein sequence ID" value="EIE77779.1"/>
    <property type="status" value="ALT_SEQ"/>
    <property type="molecule type" value="Genomic_DNA"/>
</dbReference>
<dbReference type="SMR" id="P0C1H8"/>
<dbReference type="FunCoup" id="P0C1H8">
    <property type="interactions" value="281"/>
</dbReference>
<dbReference type="STRING" id="246409.P0C1H8"/>
<dbReference type="eggNOG" id="KOG0865">
    <property type="taxonomic scope" value="Eukaryota"/>
</dbReference>
<dbReference type="InParanoid" id="P0C1H8"/>
<dbReference type="Proteomes" id="UP000009138">
    <property type="component" value="Unassembled WGS sequence"/>
</dbReference>
<dbReference type="GO" id="GO:0005737">
    <property type="term" value="C:cytoplasm"/>
    <property type="evidence" value="ECO:0007669"/>
    <property type="project" value="UniProtKB-SubCell"/>
</dbReference>
<dbReference type="GO" id="GO:0016018">
    <property type="term" value="F:cyclosporin A binding"/>
    <property type="evidence" value="ECO:0007669"/>
    <property type="project" value="TreeGrafter"/>
</dbReference>
<dbReference type="GO" id="GO:0003755">
    <property type="term" value="F:peptidyl-prolyl cis-trans isomerase activity"/>
    <property type="evidence" value="ECO:0007669"/>
    <property type="project" value="UniProtKB-KW"/>
</dbReference>
<dbReference type="GO" id="GO:0006457">
    <property type="term" value="P:protein folding"/>
    <property type="evidence" value="ECO:0007669"/>
    <property type="project" value="InterPro"/>
</dbReference>
<dbReference type="CDD" id="cd01926">
    <property type="entry name" value="cyclophilin_ABH_like"/>
    <property type="match status" value="1"/>
</dbReference>
<dbReference type="FunFam" id="2.40.100.10:FF:000013">
    <property type="entry name" value="Peptidyl-prolyl cis-trans isomerase"/>
    <property type="match status" value="1"/>
</dbReference>
<dbReference type="Gene3D" id="2.40.100.10">
    <property type="entry name" value="Cyclophilin-like"/>
    <property type="match status" value="1"/>
</dbReference>
<dbReference type="InterPro" id="IPR029000">
    <property type="entry name" value="Cyclophilin-like_dom_sf"/>
</dbReference>
<dbReference type="InterPro" id="IPR024936">
    <property type="entry name" value="Cyclophilin-type_PPIase"/>
</dbReference>
<dbReference type="InterPro" id="IPR020892">
    <property type="entry name" value="Cyclophilin-type_PPIase_CS"/>
</dbReference>
<dbReference type="InterPro" id="IPR002130">
    <property type="entry name" value="Cyclophilin-type_PPIase_dom"/>
</dbReference>
<dbReference type="PANTHER" id="PTHR11071">
    <property type="entry name" value="PEPTIDYL-PROLYL CIS-TRANS ISOMERASE"/>
    <property type="match status" value="1"/>
</dbReference>
<dbReference type="PANTHER" id="PTHR11071:SF561">
    <property type="entry name" value="PEPTIDYL-PROLYL CIS-TRANS ISOMERASE D-RELATED"/>
    <property type="match status" value="1"/>
</dbReference>
<dbReference type="Pfam" id="PF00160">
    <property type="entry name" value="Pro_isomerase"/>
    <property type="match status" value="1"/>
</dbReference>
<dbReference type="PIRSF" id="PIRSF001467">
    <property type="entry name" value="Peptidylpro_ismrse"/>
    <property type="match status" value="1"/>
</dbReference>
<dbReference type="PRINTS" id="PR00153">
    <property type="entry name" value="CSAPPISMRASE"/>
</dbReference>
<dbReference type="SUPFAM" id="SSF50891">
    <property type="entry name" value="Cyclophilin-like"/>
    <property type="match status" value="1"/>
</dbReference>
<dbReference type="PROSITE" id="PS00170">
    <property type="entry name" value="CSA_PPIASE_1"/>
    <property type="match status" value="1"/>
</dbReference>
<dbReference type="PROSITE" id="PS50072">
    <property type="entry name" value="CSA_PPIASE_2"/>
    <property type="match status" value="1"/>
</dbReference>
<accession>P0C1H8</accession>
<accession>I1BNJ9</accession>